<reference key="1">
    <citation type="journal article" date="1996" name="Science">
        <title>Complete genome sequence of the methanogenic archaeon, Methanococcus jannaschii.</title>
        <authorList>
            <person name="Bult C.J."/>
            <person name="White O."/>
            <person name="Olsen G.J."/>
            <person name="Zhou L."/>
            <person name="Fleischmann R.D."/>
            <person name="Sutton G.G."/>
            <person name="Blake J.A."/>
            <person name="FitzGerald L.M."/>
            <person name="Clayton R.A."/>
            <person name="Gocayne J.D."/>
            <person name="Kerlavage A.R."/>
            <person name="Dougherty B.A."/>
            <person name="Tomb J.-F."/>
            <person name="Adams M.D."/>
            <person name="Reich C.I."/>
            <person name="Overbeek R."/>
            <person name="Kirkness E.F."/>
            <person name="Weinstock K.G."/>
            <person name="Merrick J.M."/>
            <person name="Glodek A."/>
            <person name="Scott J.L."/>
            <person name="Geoghagen N.S.M."/>
            <person name="Weidman J.F."/>
            <person name="Fuhrmann J.L."/>
            <person name="Nguyen D."/>
            <person name="Utterback T.R."/>
            <person name="Kelley J.M."/>
            <person name="Peterson J.D."/>
            <person name="Sadow P.W."/>
            <person name="Hanna M.C."/>
            <person name="Cotton M.D."/>
            <person name="Roberts K.M."/>
            <person name="Hurst M.A."/>
            <person name="Kaine B.P."/>
            <person name="Borodovsky M."/>
            <person name="Klenk H.-P."/>
            <person name="Fraser C.M."/>
            <person name="Smith H.O."/>
            <person name="Woese C.R."/>
            <person name="Venter J.C."/>
        </authorList>
    </citation>
    <scope>NUCLEOTIDE SEQUENCE [LARGE SCALE GENOMIC DNA]</scope>
    <source>
        <strain>ATCC 43067 / DSM 2661 / JAL-1 / JCM 10045 / NBRC 100440</strain>
    </source>
</reference>
<name>Y1326_METJA</name>
<organism>
    <name type="scientific">Methanocaldococcus jannaschii (strain ATCC 43067 / DSM 2661 / JAL-1 / JCM 10045 / NBRC 100440)</name>
    <name type="common">Methanococcus jannaschii</name>
    <dbReference type="NCBI Taxonomy" id="243232"/>
    <lineage>
        <taxon>Archaea</taxon>
        <taxon>Methanobacteriati</taxon>
        <taxon>Methanobacteriota</taxon>
        <taxon>Methanomada group</taxon>
        <taxon>Methanococci</taxon>
        <taxon>Methanococcales</taxon>
        <taxon>Methanocaldococcaceae</taxon>
        <taxon>Methanocaldococcus</taxon>
    </lineage>
</organism>
<keyword id="KW-0342">GTP-binding</keyword>
<keyword id="KW-0547">Nucleotide-binding</keyword>
<keyword id="KW-1185">Reference proteome</keyword>
<evidence type="ECO:0000255" key="1">
    <source>
        <dbReference type="PROSITE-ProRule" id="PRU01047"/>
    </source>
</evidence>
<evidence type="ECO:0000255" key="2">
    <source>
        <dbReference type="PROSITE-ProRule" id="PRU01228"/>
    </source>
</evidence>
<dbReference type="EMBL" id="L77117">
    <property type="protein sequence ID" value="AAB99336.1"/>
    <property type="molecule type" value="Genomic_DNA"/>
</dbReference>
<dbReference type="PIR" id="E64465">
    <property type="entry name" value="E64465"/>
</dbReference>
<dbReference type="SMR" id="Q58722"/>
<dbReference type="FunCoup" id="Q58722">
    <property type="interactions" value="191"/>
</dbReference>
<dbReference type="STRING" id="243232.MJ_1326"/>
<dbReference type="PaxDb" id="243232-MJ_1326"/>
<dbReference type="EnsemblBacteria" id="AAB99336">
    <property type="protein sequence ID" value="AAB99336"/>
    <property type="gene ID" value="MJ_1326"/>
</dbReference>
<dbReference type="KEGG" id="mja:MJ_1326"/>
<dbReference type="eggNOG" id="arCOG00358">
    <property type="taxonomic scope" value="Archaea"/>
</dbReference>
<dbReference type="HOGENOM" id="CLU_044997_0_0_2"/>
<dbReference type="InParanoid" id="Q58722"/>
<dbReference type="PhylomeDB" id="Q58722"/>
<dbReference type="Proteomes" id="UP000000805">
    <property type="component" value="Chromosome"/>
</dbReference>
<dbReference type="GO" id="GO:0005737">
    <property type="term" value="C:cytoplasm"/>
    <property type="evidence" value="ECO:0000318"/>
    <property type="project" value="GO_Central"/>
</dbReference>
<dbReference type="GO" id="GO:0005525">
    <property type="term" value="F:GTP binding"/>
    <property type="evidence" value="ECO:0000318"/>
    <property type="project" value="GO_Central"/>
</dbReference>
<dbReference type="GO" id="GO:0003924">
    <property type="term" value="F:GTPase activity"/>
    <property type="evidence" value="ECO:0007669"/>
    <property type="project" value="InterPro"/>
</dbReference>
<dbReference type="GO" id="GO:0002181">
    <property type="term" value="P:cytoplasmic translation"/>
    <property type="evidence" value="ECO:0000318"/>
    <property type="project" value="GO_Central"/>
</dbReference>
<dbReference type="CDD" id="cd01896">
    <property type="entry name" value="DRG"/>
    <property type="match status" value="1"/>
</dbReference>
<dbReference type="CDD" id="cd01666">
    <property type="entry name" value="TGS_DRG"/>
    <property type="match status" value="1"/>
</dbReference>
<dbReference type="FunFam" id="3.10.20.30:FF:000016">
    <property type="entry name" value="Developmentally-regulated GTP-binding protein 2"/>
    <property type="match status" value="1"/>
</dbReference>
<dbReference type="Gene3D" id="3.10.20.30">
    <property type="match status" value="1"/>
</dbReference>
<dbReference type="Gene3D" id="6.10.140.1070">
    <property type="match status" value="1"/>
</dbReference>
<dbReference type="Gene3D" id="3.40.50.300">
    <property type="entry name" value="P-loop containing nucleotide triphosphate hydrolases"/>
    <property type="match status" value="1"/>
</dbReference>
<dbReference type="InterPro" id="IPR012675">
    <property type="entry name" value="Beta-grasp_dom_sf"/>
</dbReference>
<dbReference type="InterPro" id="IPR045001">
    <property type="entry name" value="DRG"/>
</dbReference>
<dbReference type="InterPro" id="IPR031167">
    <property type="entry name" value="G_OBG"/>
</dbReference>
<dbReference type="InterPro" id="IPR006073">
    <property type="entry name" value="GTP-bd"/>
</dbReference>
<dbReference type="InterPro" id="IPR031662">
    <property type="entry name" value="GTP-binding_2"/>
</dbReference>
<dbReference type="InterPro" id="IPR006074">
    <property type="entry name" value="GTP1-OBG_CS"/>
</dbReference>
<dbReference type="InterPro" id="IPR027417">
    <property type="entry name" value="P-loop_NTPase"/>
</dbReference>
<dbReference type="InterPro" id="IPR005225">
    <property type="entry name" value="Small_GTP-bd"/>
</dbReference>
<dbReference type="InterPro" id="IPR004095">
    <property type="entry name" value="TGS"/>
</dbReference>
<dbReference type="NCBIfam" id="TIGR00231">
    <property type="entry name" value="small_GTP"/>
    <property type="match status" value="1"/>
</dbReference>
<dbReference type="PANTHER" id="PTHR43127">
    <property type="entry name" value="DEVELOPMENTALLY-REGULATED GTP-BINDING PROTEIN 2"/>
    <property type="match status" value="1"/>
</dbReference>
<dbReference type="Pfam" id="PF01926">
    <property type="entry name" value="MMR_HSR1"/>
    <property type="match status" value="1"/>
</dbReference>
<dbReference type="Pfam" id="PF16897">
    <property type="entry name" value="MMR_HSR1_Xtn"/>
    <property type="match status" value="1"/>
</dbReference>
<dbReference type="Pfam" id="PF02824">
    <property type="entry name" value="TGS"/>
    <property type="match status" value="1"/>
</dbReference>
<dbReference type="PRINTS" id="PR00326">
    <property type="entry name" value="GTP1OBG"/>
</dbReference>
<dbReference type="SUPFAM" id="SSF52540">
    <property type="entry name" value="P-loop containing nucleoside triphosphate hydrolases"/>
    <property type="match status" value="1"/>
</dbReference>
<dbReference type="PROSITE" id="PS51710">
    <property type="entry name" value="G_OBG"/>
    <property type="match status" value="1"/>
</dbReference>
<dbReference type="PROSITE" id="PS00905">
    <property type="entry name" value="GTP1_OBG"/>
    <property type="match status" value="1"/>
</dbReference>
<dbReference type="PROSITE" id="PS51880">
    <property type="entry name" value="TGS"/>
    <property type="match status" value="1"/>
</dbReference>
<sequence>MLFLLSLKRIFIFRNHKFNIVGDVMGIEEEIRRIEEELKKTPYNKATQKHIGRLKAKLAKLREQAQSRGGGGGGKGYAVKKSGDATAAFVGFPSVGKSTLLNKLTNAKSEVGAYAFTTLTIVPGILEYKGAKIQLLDAPGIIVGASSGKGRGTEVLSAVRSADLILLTVDIYTLDHLPVLEKELYNVGIRLDQTPPDVKIKVKERGGINVSSTVPLTHIDEDTIEAILNEYRIHNADVVIREDITLEQFIDVVAGNRVYIPSLVVVNKIDLADEEYLKYIKQKLEEFGKDYILVSGNKGINLDLLKEKIYEKLGFIKIYLKPQGKKPDFDEPLIMRRGATVKDVCEKLHKDFVRNFRYAQVWGKSAKHPGQRVGLDHKLEDGDILTIVIKR</sequence>
<feature type="chain" id="PRO_0000205445" description="Uncharacterized GTP-binding protein MJ1326">
    <location>
        <begin position="1"/>
        <end position="391"/>
    </location>
</feature>
<feature type="domain" description="OBG-type G" evidence="1">
    <location>
        <begin position="85"/>
        <end position="314"/>
    </location>
</feature>
<feature type="domain" description="TGS" evidence="2">
    <location>
        <begin position="314"/>
        <end position="389"/>
    </location>
</feature>
<feature type="binding site" evidence="1">
    <location>
        <begin position="91"/>
        <end position="98"/>
    </location>
    <ligand>
        <name>GTP</name>
        <dbReference type="ChEBI" id="CHEBI:37565"/>
    </ligand>
</feature>
<feature type="binding site" evidence="1">
    <location>
        <begin position="137"/>
        <end position="141"/>
    </location>
    <ligand>
        <name>GTP</name>
        <dbReference type="ChEBI" id="CHEBI:37565"/>
    </ligand>
</feature>
<feature type="binding site" evidence="1">
    <location>
        <begin position="267"/>
        <end position="270"/>
    </location>
    <ligand>
        <name>GTP</name>
        <dbReference type="ChEBI" id="CHEBI:37565"/>
    </ligand>
</feature>
<gene>
    <name type="ordered locus">MJ1326</name>
</gene>
<comment type="similarity">
    <text evidence="1">Belongs to the TRAFAC class OBG-HflX-like GTPase superfamily. OBG GTPase family.</text>
</comment>
<accession>Q58722</accession>
<proteinExistence type="inferred from homology"/>
<protein>
    <recommendedName>
        <fullName>Uncharacterized GTP-binding protein MJ1326</fullName>
    </recommendedName>
</protein>